<sequence length="406" mass="45312">MTEHLPMPQFGPLAGVRVVFSGIEIAGPFAGQMFAEWGAEVIWIENVAWADTIRVQPHYPQLSRRNLHALSLNIFKDGGRDAFLKLMETTDIFIEASKGPAFARRGITDEVLWEHNPKLVIAHLSGFGQYGDPQYTNLPAYNTIAQAFSGYLIQNGDKDQPMPAFPYTADYFSGMTATTSALAALYKVQQTGKGESIDIAMYEVMLRMGQYFMMDYFNGGEICPRMTKGKEPYYAGCGLYRCQDGYIVMEVVGITQIEEIFKDIGLAHLLGTPEVPKGTQLIHRINCPHGQLFEDELDEWLANQPITAVLKRLSELNIASAKVLTIPELEGNPQYVARESITQWKTMSGETCKGPNIMPKFKNNPGKIWRGMPAHGMDTNAILKNIGYSDEQIRELVDKGLAKIVE</sequence>
<organism>
    <name type="scientific">Proteus sp. (strain LE138)</name>
    <dbReference type="NCBI Taxonomy" id="217617"/>
    <lineage>
        <taxon>Bacteria</taxon>
        <taxon>Pseudomonadati</taxon>
        <taxon>Pseudomonadota</taxon>
        <taxon>Gammaproteobacteria</taxon>
        <taxon>Enterobacterales</taxon>
        <taxon>Morganellaceae</taxon>
        <taxon>Proteus</taxon>
    </lineage>
</organism>
<name>CAIB_PROSL</name>
<keyword id="KW-0963">Cytoplasm</keyword>
<keyword id="KW-0903">Direct protein sequencing</keyword>
<keyword id="KW-0808">Transferase</keyword>
<feature type="chain" id="PRO_0000194711" description="L-carnitine CoA-transferase">
    <location>
        <begin position="1"/>
        <end position="406"/>
    </location>
</feature>
<feature type="active site" description="Nucleophile" evidence="1">
    <location>
        <position position="170"/>
    </location>
</feature>
<feature type="binding site" evidence="1">
    <location>
        <position position="98"/>
    </location>
    <ligand>
        <name>CoA</name>
        <dbReference type="ChEBI" id="CHEBI:57287"/>
    </ligand>
</feature>
<feature type="binding site" evidence="1">
    <location>
        <position position="105"/>
    </location>
    <ligand>
        <name>CoA</name>
        <dbReference type="ChEBI" id="CHEBI:57287"/>
    </ligand>
</feature>
<feature type="sequence conflict" description="In Ref. 2; AA sequence." evidence="4" ref="2">
    <original>S</original>
    <variation>F</variation>
    <location>
        <position position="21"/>
    </location>
</feature>
<proteinExistence type="evidence at protein level"/>
<gene>
    <name type="primary">caiB</name>
</gene>
<evidence type="ECO:0000250" key="1"/>
<evidence type="ECO:0000255" key="2">
    <source>
        <dbReference type="HAMAP-Rule" id="MF_01050"/>
    </source>
</evidence>
<evidence type="ECO:0000269" key="3">
    <source>
    </source>
</evidence>
<evidence type="ECO:0000305" key="4"/>
<dbReference type="EC" id="2.8.3.21"/>
<dbReference type="EMBL" id="AJ508908">
    <property type="protein sequence ID" value="CAD48580.1"/>
    <property type="molecule type" value="Genomic_DNA"/>
</dbReference>
<dbReference type="SMR" id="Q8GB19"/>
<dbReference type="KEGG" id="ag:CAD48580"/>
<dbReference type="BRENDA" id="2.8.3.21">
    <property type="organism ID" value="5048"/>
</dbReference>
<dbReference type="UniPathway" id="UPA00117"/>
<dbReference type="GO" id="GO:0005737">
    <property type="term" value="C:cytoplasm"/>
    <property type="evidence" value="ECO:0007669"/>
    <property type="project" value="UniProtKB-SubCell"/>
</dbReference>
<dbReference type="GO" id="GO:0008735">
    <property type="term" value="F:L-carnitine CoA-transferase activity"/>
    <property type="evidence" value="ECO:0007669"/>
    <property type="project" value="RHEA"/>
</dbReference>
<dbReference type="GO" id="GO:0009437">
    <property type="term" value="P:carnitine metabolic process"/>
    <property type="evidence" value="ECO:0007669"/>
    <property type="project" value="UniProtKB-UniRule"/>
</dbReference>
<dbReference type="Gene3D" id="3.40.50.10540">
    <property type="entry name" value="Crotonobetainyl-coa:carnitine coa-transferase, domain 1"/>
    <property type="match status" value="1"/>
</dbReference>
<dbReference type="Gene3D" id="3.30.1540.10">
    <property type="entry name" value="formyl-coa transferase, domain 3"/>
    <property type="match status" value="1"/>
</dbReference>
<dbReference type="HAMAP" id="MF_01050">
    <property type="entry name" value="CaiB"/>
    <property type="match status" value="1"/>
</dbReference>
<dbReference type="InterPro" id="IPR050509">
    <property type="entry name" value="CoA-transferase_III"/>
</dbReference>
<dbReference type="InterPro" id="IPR023452">
    <property type="entry name" value="CoA-Trfase_CaiB"/>
</dbReference>
<dbReference type="InterPro" id="IPR003673">
    <property type="entry name" value="CoA-Trfase_fam_III"/>
</dbReference>
<dbReference type="InterPro" id="IPR044855">
    <property type="entry name" value="CoA-Trfase_III_dom3_sf"/>
</dbReference>
<dbReference type="InterPro" id="IPR023606">
    <property type="entry name" value="CoA-Trfase_III_dom_1_sf"/>
</dbReference>
<dbReference type="NCBIfam" id="NF002914">
    <property type="entry name" value="PRK03525.1"/>
    <property type="match status" value="1"/>
</dbReference>
<dbReference type="PANTHER" id="PTHR48228:SF6">
    <property type="entry name" value="L-CARNITINE COA-TRANSFERASE"/>
    <property type="match status" value="1"/>
</dbReference>
<dbReference type="PANTHER" id="PTHR48228">
    <property type="entry name" value="SUCCINYL-COA--D-CITRAMALATE COA-TRANSFERASE"/>
    <property type="match status" value="1"/>
</dbReference>
<dbReference type="Pfam" id="PF02515">
    <property type="entry name" value="CoA_transf_3"/>
    <property type="match status" value="1"/>
</dbReference>
<dbReference type="SUPFAM" id="SSF89796">
    <property type="entry name" value="CoA-transferase family III (CaiB/BaiF)"/>
    <property type="match status" value="1"/>
</dbReference>
<accession>Q8GB19</accession>
<reference key="1">
    <citation type="submission" date="2002-09" db="EMBL/GenBank/DDBJ databases">
        <title>Cai locus and corresponding enzymes of Proteus sp.</title>
        <authorList>
            <person name="Engemann C."/>
            <person name="Elssner T."/>
            <person name="Pfeifer S."/>
            <person name="Krumbholz C."/>
            <person name="Maier T."/>
            <person name="Kleber H.-P."/>
        </authorList>
    </citation>
    <scope>NUCLEOTIDE SEQUENCE [GENOMIC DNA]</scope>
</reference>
<reference key="2">
    <citation type="journal article" date="2001" name="Arch. Microbiol.">
        <title>Biotransformation of crotonobetaine to L(-)-carnitine in Proteus sp.</title>
        <authorList>
            <person name="Engemann C."/>
            <person name="Elssner T."/>
            <person name="Kleber H.-P."/>
        </authorList>
    </citation>
    <scope>PROTEIN SEQUENCE OF 1-25</scope>
    <scope>SUBUNIT</scope>
</reference>
<protein>
    <recommendedName>
        <fullName>L-carnitine CoA-transferase</fullName>
        <ecNumber>2.8.3.21</ecNumber>
    </recommendedName>
    <alternativeName>
        <fullName>Crotonobetainyl-CoA:carnitine CoA-transferase</fullName>
    </alternativeName>
</protein>
<comment type="function">
    <text evidence="1">Catalyzes the reversible transfer of the CoA moiety from gamma-butyrobetainyl-CoA to L-carnitine to generate L-carnitinyl-CoA and gamma-butyrobetaine. Is also able to catalyze the reversible transfer of the CoA moiety from gamma-butyrobetainyl-CoA or L-carnitinyl-CoA to crotonobetaine to generate crotonobetainyl-CoA (By similarity).</text>
</comment>
<comment type="catalytic activity">
    <reaction>
        <text>crotonobetainyl-CoA + (R)-carnitine = crotonobetaine + (R)-carnitinyl-CoA</text>
        <dbReference type="Rhea" id="RHEA:28526"/>
        <dbReference type="ChEBI" id="CHEBI:16347"/>
        <dbReference type="ChEBI" id="CHEBI:17237"/>
        <dbReference type="ChEBI" id="CHEBI:60932"/>
        <dbReference type="ChEBI" id="CHEBI:60933"/>
        <dbReference type="EC" id="2.8.3.21"/>
    </reaction>
</comment>
<comment type="catalytic activity">
    <reaction>
        <text>4-(trimethylamino)butanoyl-CoA + (R)-carnitine = (R)-carnitinyl-CoA + 4-(trimethylamino)butanoate</text>
        <dbReference type="Rhea" id="RHEA:28418"/>
        <dbReference type="ChEBI" id="CHEBI:16244"/>
        <dbReference type="ChEBI" id="CHEBI:16347"/>
        <dbReference type="ChEBI" id="CHEBI:60932"/>
        <dbReference type="ChEBI" id="CHEBI:61513"/>
        <dbReference type="EC" id="2.8.3.21"/>
    </reaction>
</comment>
<comment type="pathway">
    <text>Amine and polyamine metabolism; carnitine metabolism.</text>
</comment>
<comment type="subunit">
    <text evidence="3">Homodimer.</text>
</comment>
<comment type="subcellular location">
    <subcellularLocation>
        <location evidence="1">Cytoplasm</location>
    </subcellularLocation>
</comment>
<comment type="similarity">
    <text evidence="2">Belongs to the CoA-transferase III family. CaiB subfamily.</text>
</comment>